<dbReference type="EMBL" id="AY653733">
    <property type="protein sequence ID" value="AAV50976.1"/>
    <property type="molecule type" value="Genomic_DNA"/>
</dbReference>
<dbReference type="SMR" id="Q5UNX1"/>
<dbReference type="KEGG" id="vg:9925370"/>
<dbReference type="OrthoDB" id="12818at10239"/>
<dbReference type="Proteomes" id="UP000001134">
    <property type="component" value="Genome"/>
</dbReference>
<dbReference type="GO" id="GO:0016740">
    <property type="term" value="F:transferase activity"/>
    <property type="evidence" value="ECO:0007669"/>
    <property type="project" value="UniProtKB-KW"/>
</dbReference>
<dbReference type="Gene3D" id="3.40.50.880">
    <property type="match status" value="1"/>
</dbReference>
<dbReference type="InterPro" id="IPR044992">
    <property type="entry name" value="ChyE-like"/>
</dbReference>
<dbReference type="InterPro" id="IPR029062">
    <property type="entry name" value="Class_I_gatase-like"/>
</dbReference>
<dbReference type="InterPro" id="IPR017926">
    <property type="entry name" value="GATASE"/>
</dbReference>
<dbReference type="PANTHER" id="PTHR42695">
    <property type="entry name" value="GLUTAMINE AMIDOTRANSFERASE YLR126C-RELATED"/>
    <property type="match status" value="1"/>
</dbReference>
<dbReference type="PANTHER" id="PTHR42695:SF5">
    <property type="entry name" value="GLUTAMINE AMIDOTRANSFERASE YLR126C-RELATED"/>
    <property type="match status" value="1"/>
</dbReference>
<dbReference type="Pfam" id="PF00117">
    <property type="entry name" value="GATase"/>
    <property type="match status" value="1"/>
</dbReference>
<dbReference type="SUPFAM" id="SSF52317">
    <property type="entry name" value="Class I glutamine amidotransferase-like"/>
    <property type="match status" value="1"/>
</dbReference>
<dbReference type="PROSITE" id="PS51273">
    <property type="entry name" value="GATASE_TYPE_1"/>
    <property type="match status" value="1"/>
</dbReference>
<gene>
    <name type="ordered locus">MIMI_L716</name>
</gene>
<sequence>MLLIIQNGYITPYIYRYLDEDYEIIKSFNVDVTTMDLDKYSVVIILGGYQSVVDINKYSYLLKVIELIKKCLTVKKPLFGICLGFQLIAYALGCEIKSSGKLNVGYDTTILGYDNVFRCHIDYIIPNDSVEVLEYFDNMPYLYKHDNHVYGIQCHPDIAPECIKKYSNHIESYDYAAANKDSINKTNAIIIKYILNLLRDSIKKD</sequence>
<feature type="chain" id="PRO_0000243992" description="Putative glutamine amidotransferase-like protein L716">
    <location>
        <begin position="1"/>
        <end position="205"/>
    </location>
</feature>
<feature type="domain" description="Glutamine amidotransferase type-1" evidence="1">
    <location>
        <begin position="1"/>
        <end position="176"/>
    </location>
</feature>
<feature type="active site" description="For GATase activity" evidence="1">
    <location>
        <position position="82"/>
    </location>
</feature>
<feature type="active site" description="For GATase activity" evidence="1">
    <location>
        <position position="155"/>
    </location>
</feature>
<feature type="active site" description="For GATase activity" evidence="1">
    <location>
        <position position="157"/>
    </location>
</feature>
<accession>Q5UNX1</accession>
<protein>
    <recommendedName>
        <fullName>Putative glutamine amidotransferase-like protein L716</fullName>
    </recommendedName>
</protein>
<proteinExistence type="predicted"/>
<evidence type="ECO:0000255" key="1">
    <source>
        <dbReference type="PROSITE-ProRule" id="PRU00605"/>
    </source>
</evidence>
<reference key="1">
    <citation type="journal article" date="2004" name="Science">
        <title>The 1.2-megabase genome sequence of Mimivirus.</title>
        <authorList>
            <person name="Raoult D."/>
            <person name="Audic S."/>
            <person name="Robert C."/>
            <person name="Abergel C."/>
            <person name="Renesto P."/>
            <person name="Ogata H."/>
            <person name="La Scola B."/>
            <person name="Susan M."/>
            <person name="Claverie J.-M."/>
        </authorList>
    </citation>
    <scope>NUCLEOTIDE SEQUENCE [LARGE SCALE GENOMIC DNA]</scope>
    <source>
        <strain>Rowbotham-Bradford</strain>
    </source>
</reference>
<keyword id="KW-0315">Glutamine amidotransferase</keyword>
<keyword id="KW-1185">Reference proteome</keyword>
<keyword id="KW-0808">Transferase</keyword>
<organism>
    <name type="scientific">Acanthamoeba polyphaga mimivirus</name>
    <name type="common">APMV</name>
    <dbReference type="NCBI Taxonomy" id="212035"/>
    <lineage>
        <taxon>Viruses</taxon>
        <taxon>Varidnaviria</taxon>
        <taxon>Bamfordvirae</taxon>
        <taxon>Nucleocytoviricota</taxon>
        <taxon>Megaviricetes</taxon>
        <taxon>Imitervirales</taxon>
        <taxon>Mimiviridae</taxon>
        <taxon>Megamimivirinae</taxon>
        <taxon>Mimivirus</taxon>
        <taxon>Mimivirus bradfordmassiliense</taxon>
    </lineage>
</organism>
<name>YL716_MIMIV</name>
<organismHost>
    <name type="scientific">Acanthamoeba polyphaga</name>
    <name type="common">Amoeba</name>
    <dbReference type="NCBI Taxonomy" id="5757"/>
</organismHost>